<feature type="chain" id="PRO_0000284230" description="Endoribonuclease YbeY">
    <location>
        <begin position="1"/>
        <end position="162"/>
    </location>
</feature>
<feature type="binding site" evidence="1">
    <location>
        <position position="128"/>
    </location>
    <ligand>
        <name>Zn(2+)</name>
        <dbReference type="ChEBI" id="CHEBI:29105"/>
        <note>catalytic</note>
    </ligand>
</feature>
<feature type="binding site" evidence="1">
    <location>
        <position position="132"/>
    </location>
    <ligand>
        <name>Zn(2+)</name>
        <dbReference type="ChEBI" id="CHEBI:29105"/>
        <note>catalytic</note>
    </ligand>
</feature>
<feature type="binding site" evidence="1">
    <location>
        <position position="138"/>
    </location>
    <ligand>
        <name>Zn(2+)</name>
        <dbReference type="ChEBI" id="CHEBI:29105"/>
        <note>catalytic</note>
    </ligand>
</feature>
<accession>Q02ZA2</accession>
<sequence length="162" mass="18815">MYVELVDETGQVPSEIIEQTKEVLAFAAKKLDLKESTEMSVTFVDNARSHELNLQYRETDRPTDVISLEYKPDESEFFFDEDMELPEELLEEMDPFIGELFISIDKAAEQAADYGHSIEREYGWLAVHGFLHINGYDHYMPEEESEMFALQEEILTAYGLTR</sequence>
<keyword id="KW-0963">Cytoplasm</keyword>
<keyword id="KW-0255">Endonuclease</keyword>
<keyword id="KW-0378">Hydrolase</keyword>
<keyword id="KW-0479">Metal-binding</keyword>
<keyword id="KW-0540">Nuclease</keyword>
<keyword id="KW-0690">Ribosome biogenesis</keyword>
<keyword id="KW-0698">rRNA processing</keyword>
<keyword id="KW-0862">Zinc</keyword>
<dbReference type="EC" id="3.1.-.-" evidence="1"/>
<dbReference type="EMBL" id="CP000425">
    <property type="protein sequence ID" value="ABJ72720.1"/>
    <property type="molecule type" value="Genomic_DNA"/>
</dbReference>
<dbReference type="RefSeq" id="WP_011676093.1">
    <property type="nucleotide sequence ID" value="NC_008527.1"/>
</dbReference>
<dbReference type="SMR" id="Q02ZA2"/>
<dbReference type="KEGG" id="llc:LACR_1186"/>
<dbReference type="HOGENOM" id="CLU_106710_3_0_9"/>
<dbReference type="Proteomes" id="UP000000240">
    <property type="component" value="Chromosome"/>
</dbReference>
<dbReference type="GO" id="GO:0005737">
    <property type="term" value="C:cytoplasm"/>
    <property type="evidence" value="ECO:0007669"/>
    <property type="project" value="UniProtKB-SubCell"/>
</dbReference>
<dbReference type="GO" id="GO:0004222">
    <property type="term" value="F:metalloendopeptidase activity"/>
    <property type="evidence" value="ECO:0007669"/>
    <property type="project" value="InterPro"/>
</dbReference>
<dbReference type="GO" id="GO:0004521">
    <property type="term" value="F:RNA endonuclease activity"/>
    <property type="evidence" value="ECO:0007669"/>
    <property type="project" value="UniProtKB-UniRule"/>
</dbReference>
<dbReference type="GO" id="GO:0008270">
    <property type="term" value="F:zinc ion binding"/>
    <property type="evidence" value="ECO:0007669"/>
    <property type="project" value="UniProtKB-UniRule"/>
</dbReference>
<dbReference type="GO" id="GO:0006364">
    <property type="term" value="P:rRNA processing"/>
    <property type="evidence" value="ECO:0007669"/>
    <property type="project" value="UniProtKB-UniRule"/>
</dbReference>
<dbReference type="Gene3D" id="3.40.390.30">
    <property type="entry name" value="Metalloproteases ('zincins'), catalytic domain"/>
    <property type="match status" value="1"/>
</dbReference>
<dbReference type="HAMAP" id="MF_00009">
    <property type="entry name" value="Endoribonucl_YbeY"/>
    <property type="match status" value="1"/>
</dbReference>
<dbReference type="InterPro" id="IPR023091">
    <property type="entry name" value="MetalPrtase_cat_dom_sf_prd"/>
</dbReference>
<dbReference type="InterPro" id="IPR002036">
    <property type="entry name" value="YbeY"/>
</dbReference>
<dbReference type="InterPro" id="IPR020549">
    <property type="entry name" value="YbeY_CS"/>
</dbReference>
<dbReference type="NCBIfam" id="TIGR00043">
    <property type="entry name" value="rRNA maturation RNase YbeY"/>
    <property type="match status" value="1"/>
</dbReference>
<dbReference type="PANTHER" id="PTHR46986">
    <property type="entry name" value="ENDORIBONUCLEASE YBEY, CHLOROPLASTIC"/>
    <property type="match status" value="1"/>
</dbReference>
<dbReference type="PANTHER" id="PTHR46986:SF1">
    <property type="entry name" value="ENDORIBONUCLEASE YBEY, CHLOROPLASTIC"/>
    <property type="match status" value="1"/>
</dbReference>
<dbReference type="Pfam" id="PF02130">
    <property type="entry name" value="YbeY"/>
    <property type="match status" value="1"/>
</dbReference>
<dbReference type="SUPFAM" id="SSF55486">
    <property type="entry name" value="Metalloproteases ('zincins'), catalytic domain"/>
    <property type="match status" value="1"/>
</dbReference>
<dbReference type="PROSITE" id="PS01306">
    <property type="entry name" value="UPF0054"/>
    <property type="match status" value="1"/>
</dbReference>
<gene>
    <name evidence="1" type="primary">ybeY</name>
    <name type="ordered locus">LACR_1186</name>
</gene>
<reference key="1">
    <citation type="journal article" date="2006" name="Proc. Natl. Acad. Sci. U.S.A.">
        <title>Comparative genomics of the lactic acid bacteria.</title>
        <authorList>
            <person name="Makarova K.S."/>
            <person name="Slesarev A."/>
            <person name="Wolf Y.I."/>
            <person name="Sorokin A."/>
            <person name="Mirkin B."/>
            <person name="Koonin E.V."/>
            <person name="Pavlov A."/>
            <person name="Pavlova N."/>
            <person name="Karamychev V."/>
            <person name="Polouchine N."/>
            <person name="Shakhova V."/>
            <person name="Grigoriev I."/>
            <person name="Lou Y."/>
            <person name="Rohksar D."/>
            <person name="Lucas S."/>
            <person name="Huang K."/>
            <person name="Goodstein D.M."/>
            <person name="Hawkins T."/>
            <person name="Plengvidhya V."/>
            <person name="Welker D."/>
            <person name="Hughes J."/>
            <person name="Goh Y."/>
            <person name="Benson A."/>
            <person name="Baldwin K."/>
            <person name="Lee J.-H."/>
            <person name="Diaz-Muniz I."/>
            <person name="Dosti B."/>
            <person name="Smeianov V."/>
            <person name="Wechter W."/>
            <person name="Barabote R."/>
            <person name="Lorca G."/>
            <person name="Altermann E."/>
            <person name="Barrangou R."/>
            <person name="Ganesan B."/>
            <person name="Xie Y."/>
            <person name="Rawsthorne H."/>
            <person name="Tamir D."/>
            <person name="Parker C."/>
            <person name="Breidt F."/>
            <person name="Broadbent J.R."/>
            <person name="Hutkins R."/>
            <person name="O'Sullivan D."/>
            <person name="Steele J."/>
            <person name="Unlu G."/>
            <person name="Saier M.H. Jr."/>
            <person name="Klaenhammer T."/>
            <person name="Richardson P."/>
            <person name="Kozyavkin S."/>
            <person name="Weimer B.C."/>
            <person name="Mills D.A."/>
        </authorList>
    </citation>
    <scope>NUCLEOTIDE SEQUENCE [LARGE SCALE GENOMIC DNA]</scope>
    <source>
        <strain>SK11</strain>
    </source>
</reference>
<name>YBEY_LACLS</name>
<protein>
    <recommendedName>
        <fullName evidence="1">Endoribonuclease YbeY</fullName>
        <ecNumber evidence="1">3.1.-.-</ecNumber>
    </recommendedName>
</protein>
<proteinExistence type="inferred from homology"/>
<organism>
    <name type="scientific">Lactococcus lactis subsp. cremoris (strain SK11)</name>
    <dbReference type="NCBI Taxonomy" id="272622"/>
    <lineage>
        <taxon>Bacteria</taxon>
        <taxon>Bacillati</taxon>
        <taxon>Bacillota</taxon>
        <taxon>Bacilli</taxon>
        <taxon>Lactobacillales</taxon>
        <taxon>Streptococcaceae</taxon>
        <taxon>Lactococcus</taxon>
        <taxon>Lactococcus cremoris subsp. cremoris</taxon>
    </lineage>
</organism>
<comment type="function">
    <text evidence="1">Single strand-specific metallo-endoribonuclease involved in late-stage 70S ribosome quality control and in maturation of the 3' terminus of the 16S rRNA.</text>
</comment>
<comment type="cofactor">
    <cofactor evidence="1">
        <name>Zn(2+)</name>
        <dbReference type="ChEBI" id="CHEBI:29105"/>
    </cofactor>
    <text evidence="1">Binds 1 zinc ion.</text>
</comment>
<comment type="subcellular location">
    <subcellularLocation>
        <location evidence="1">Cytoplasm</location>
    </subcellularLocation>
</comment>
<comment type="similarity">
    <text evidence="1">Belongs to the endoribonuclease YbeY family.</text>
</comment>
<evidence type="ECO:0000255" key="1">
    <source>
        <dbReference type="HAMAP-Rule" id="MF_00009"/>
    </source>
</evidence>